<reference key="1">
    <citation type="submission" date="2008-06" db="EMBL/GenBank/DDBJ databases">
        <title>Lactobacillus casei BL23 complete genome sequence.</title>
        <authorList>
            <person name="Maze A."/>
            <person name="Boel G."/>
            <person name="Bourand A."/>
            <person name="Loux V."/>
            <person name="Gibrat J.F."/>
            <person name="Zuniga M."/>
            <person name="Hartke A."/>
            <person name="Deutscher J."/>
        </authorList>
    </citation>
    <scope>NUCLEOTIDE SEQUENCE [LARGE SCALE GENOMIC DNA]</scope>
    <source>
        <strain>BL23</strain>
    </source>
</reference>
<protein>
    <recommendedName>
        <fullName evidence="1">Glycogen synthase</fullName>
        <ecNumber evidence="1">2.4.1.21</ecNumber>
    </recommendedName>
    <alternativeName>
        <fullName evidence="1">Starch [bacterial glycogen] synthase</fullName>
    </alternativeName>
</protein>
<proteinExistence type="inferred from homology"/>
<keyword id="KW-0320">Glycogen biosynthesis</keyword>
<keyword id="KW-0328">Glycosyltransferase</keyword>
<keyword id="KW-0808">Transferase</keyword>
<accession>B3W9A1</accession>
<gene>
    <name evidence="1" type="primary">glgA</name>
    <name type="ordered locus">LCABL_22030</name>
</gene>
<dbReference type="EC" id="2.4.1.21" evidence="1"/>
<dbReference type="EMBL" id="FM177140">
    <property type="protein sequence ID" value="CAQ67270.1"/>
    <property type="molecule type" value="Genomic_DNA"/>
</dbReference>
<dbReference type="SMR" id="B3W9A1"/>
<dbReference type="CAZy" id="GT5">
    <property type="family name" value="Glycosyltransferase Family 5"/>
</dbReference>
<dbReference type="KEGG" id="lcb:LCABL_22030"/>
<dbReference type="HOGENOM" id="CLU_009583_18_2_9"/>
<dbReference type="UniPathway" id="UPA00164"/>
<dbReference type="GO" id="GO:0009011">
    <property type="term" value="F:alpha-1,4-glucan glucosyltransferase (ADP-glucose donor) activity"/>
    <property type="evidence" value="ECO:0007669"/>
    <property type="project" value="UniProtKB-UniRule"/>
</dbReference>
<dbReference type="GO" id="GO:0004373">
    <property type="term" value="F:alpha-1,4-glucan glucosyltransferase (UDP-glucose donor) activity"/>
    <property type="evidence" value="ECO:0007669"/>
    <property type="project" value="InterPro"/>
</dbReference>
<dbReference type="GO" id="GO:0005978">
    <property type="term" value="P:glycogen biosynthetic process"/>
    <property type="evidence" value="ECO:0007669"/>
    <property type="project" value="UniProtKB-UniRule"/>
</dbReference>
<dbReference type="CDD" id="cd03791">
    <property type="entry name" value="GT5_Glycogen_synthase_DULL1-like"/>
    <property type="match status" value="1"/>
</dbReference>
<dbReference type="Gene3D" id="3.40.50.2000">
    <property type="entry name" value="Glycogen Phosphorylase B"/>
    <property type="match status" value="2"/>
</dbReference>
<dbReference type="HAMAP" id="MF_00484">
    <property type="entry name" value="Glycogen_synth"/>
    <property type="match status" value="1"/>
</dbReference>
<dbReference type="InterPro" id="IPR001296">
    <property type="entry name" value="Glyco_trans_1"/>
</dbReference>
<dbReference type="InterPro" id="IPR011835">
    <property type="entry name" value="GS/SS"/>
</dbReference>
<dbReference type="InterPro" id="IPR013534">
    <property type="entry name" value="Starch_synth_cat_dom"/>
</dbReference>
<dbReference type="NCBIfam" id="TIGR02095">
    <property type="entry name" value="glgA"/>
    <property type="match status" value="1"/>
</dbReference>
<dbReference type="NCBIfam" id="NF001898">
    <property type="entry name" value="PRK00654.1-1"/>
    <property type="match status" value="1"/>
</dbReference>
<dbReference type="PANTHER" id="PTHR45825:SF11">
    <property type="entry name" value="ALPHA AMYLASE DOMAIN-CONTAINING PROTEIN"/>
    <property type="match status" value="1"/>
</dbReference>
<dbReference type="PANTHER" id="PTHR45825">
    <property type="entry name" value="GRANULE-BOUND STARCH SYNTHASE 1, CHLOROPLASTIC/AMYLOPLASTIC"/>
    <property type="match status" value="1"/>
</dbReference>
<dbReference type="Pfam" id="PF08323">
    <property type="entry name" value="Glyco_transf_5"/>
    <property type="match status" value="1"/>
</dbReference>
<dbReference type="Pfam" id="PF00534">
    <property type="entry name" value="Glycos_transf_1"/>
    <property type="match status" value="1"/>
</dbReference>
<dbReference type="SUPFAM" id="SSF53756">
    <property type="entry name" value="UDP-Glycosyltransferase/glycogen phosphorylase"/>
    <property type="match status" value="1"/>
</dbReference>
<organism>
    <name type="scientific">Lacticaseibacillus casei (strain BL23)</name>
    <name type="common">Lactobacillus casei</name>
    <dbReference type="NCBI Taxonomy" id="543734"/>
    <lineage>
        <taxon>Bacteria</taxon>
        <taxon>Bacillati</taxon>
        <taxon>Bacillota</taxon>
        <taxon>Bacilli</taxon>
        <taxon>Lactobacillales</taxon>
        <taxon>Lactobacillaceae</taxon>
        <taxon>Lacticaseibacillus</taxon>
    </lineage>
</organism>
<sequence length="481" mass="53996">MLKVLFTAAESAPFYKTGGLGDVTYALPKAIKKQGVDIRVAIPFYEKKFPAKYLPKVKDLTHFTLEMDGRPVYVGLKTIKLGDVTYYLIDNRQYFDRDGLYGYWDDGGRFGYFQMAVIEMLQVIEWIPDVIHANDWHTAFIPVLLKEKYGWIKPYQQIKTQLTIHNLQFQGWFPPSTLATVFGIGREGFNDDGFGQDGSINWLKGGINYADLVSTVSPSYAKEIQTPAFGEHLDGTLRKQSGKLVGILNGIDSEVYNPATDQNLAYNYDAKNLAGKAKDKKALQDEMHLPKRTDPLFAMVSRLTRQKGADLLVDALENFLVQNNVQVVVLGTGDQDLEEDLSSLQDRFPGQLAVRIDFDEGLAQRIYAGADYFMMPSAFEPSGLAQMMAMRYGTLPIVHETGGLRDSVLAYNAETGAGDGFSFWDYNAGVLTNILRMAKSVYADQPKVYAKLQQHAMVKDFDWHHSAAEYLKGYQRILGKA</sequence>
<name>GLGA_LACCB</name>
<evidence type="ECO:0000255" key="1">
    <source>
        <dbReference type="HAMAP-Rule" id="MF_00484"/>
    </source>
</evidence>
<feature type="chain" id="PRO_1000126082" description="Glycogen synthase">
    <location>
        <begin position="1"/>
        <end position="481"/>
    </location>
</feature>
<feature type="binding site" evidence="1">
    <location>
        <position position="16"/>
    </location>
    <ligand>
        <name>ADP-alpha-D-glucose</name>
        <dbReference type="ChEBI" id="CHEBI:57498"/>
    </ligand>
</feature>
<comment type="function">
    <text evidence="1">Synthesizes alpha-1,4-glucan chains using ADP-glucose.</text>
</comment>
<comment type="catalytic activity">
    <reaction evidence="1">
        <text>[(1-&gt;4)-alpha-D-glucosyl](n) + ADP-alpha-D-glucose = [(1-&gt;4)-alpha-D-glucosyl](n+1) + ADP + H(+)</text>
        <dbReference type="Rhea" id="RHEA:18189"/>
        <dbReference type="Rhea" id="RHEA-COMP:9584"/>
        <dbReference type="Rhea" id="RHEA-COMP:9587"/>
        <dbReference type="ChEBI" id="CHEBI:15378"/>
        <dbReference type="ChEBI" id="CHEBI:15444"/>
        <dbReference type="ChEBI" id="CHEBI:57498"/>
        <dbReference type="ChEBI" id="CHEBI:456216"/>
        <dbReference type="EC" id="2.4.1.21"/>
    </reaction>
</comment>
<comment type="pathway">
    <text evidence="1">Glycan biosynthesis; glycogen biosynthesis.</text>
</comment>
<comment type="similarity">
    <text evidence="1">Belongs to the glycosyltransferase 1 family. Bacterial/plant glycogen synthase subfamily.</text>
</comment>